<proteinExistence type="predicted"/>
<dbReference type="EMBL" id="BA000022">
    <property type="protein sequence ID" value="BAA17903.1"/>
    <property type="molecule type" value="Genomic_DNA"/>
</dbReference>
<dbReference type="PIR" id="S75041">
    <property type="entry name" value="S75041"/>
</dbReference>
<dbReference type="SMR" id="P73844"/>
<dbReference type="STRING" id="1148.gene:10498772"/>
<dbReference type="PaxDb" id="1148-1652986"/>
<dbReference type="EnsemblBacteria" id="BAA17903">
    <property type="protein sequence ID" value="BAA17903"/>
    <property type="gene ID" value="BAA17903"/>
</dbReference>
<dbReference type="KEGG" id="syn:sll1609"/>
<dbReference type="eggNOG" id="COG4636">
    <property type="taxonomic scope" value="Bacteria"/>
</dbReference>
<dbReference type="InParanoid" id="P73844"/>
<dbReference type="PhylomeDB" id="P73844"/>
<dbReference type="Proteomes" id="UP000001425">
    <property type="component" value="Chromosome"/>
</dbReference>
<dbReference type="CDD" id="cd06260">
    <property type="entry name" value="DUF820-like"/>
    <property type="match status" value="1"/>
</dbReference>
<dbReference type="Gene3D" id="3.90.1570.10">
    <property type="entry name" value="tt1808, chain A"/>
    <property type="match status" value="1"/>
</dbReference>
<dbReference type="InterPro" id="IPR012296">
    <property type="entry name" value="Nuclease_put_TT1808"/>
</dbReference>
<dbReference type="InterPro" id="IPR011335">
    <property type="entry name" value="Restrct_endonuc-II-like"/>
</dbReference>
<dbReference type="InterPro" id="IPR008538">
    <property type="entry name" value="Uma2"/>
</dbReference>
<dbReference type="PANTHER" id="PTHR36558">
    <property type="entry name" value="GLR1098 PROTEIN"/>
    <property type="match status" value="1"/>
</dbReference>
<dbReference type="PANTHER" id="PTHR36558:SF1">
    <property type="entry name" value="RESTRICTION ENDONUCLEASE DOMAIN-CONTAINING PROTEIN-RELATED"/>
    <property type="match status" value="1"/>
</dbReference>
<dbReference type="Pfam" id="PF05685">
    <property type="entry name" value="Uma2"/>
    <property type="match status" value="1"/>
</dbReference>
<dbReference type="SUPFAM" id="SSF52980">
    <property type="entry name" value="Restriction endonuclease-like"/>
    <property type="match status" value="1"/>
</dbReference>
<keyword id="KW-1185">Reference proteome</keyword>
<name>Y1609_SYNY3</name>
<evidence type="ECO:0000305" key="1"/>
<reference key="1">
    <citation type="journal article" date="1996" name="DNA Res.">
        <title>Sequence analysis of the genome of the unicellular cyanobacterium Synechocystis sp. strain PCC6803. II. Sequence determination of the entire genome and assignment of potential protein-coding regions.</title>
        <authorList>
            <person name="Kaneko T."/>
            <person name="Sato S."/>
            <person name="Kotani H."/>
            <person name="Tanaka A."/>
            <person name="Asamizu E."/>
            <person name="Nakamura Y."/>
            <person name="Miyajima N."/>
            <person name="Hirosawa M."/>
            <person name="Sugiura M."/>
            <person name="Sasamoto S."/>
            <person name="Kimura T."/>
            <person name="Hosouchi T."/>
            <person name="Matsuno A."/>
            <person name="Muraki A."/>
            <person name="Nakazaki N."/>
            <person name="Naruo K."/>
            <person name="Okumura S."/>
            <person name="Shimpo S."/>
            <person name="Takeuchi C."/>
            <person name="Wada T."/>
            <person name="Watanabe A."/>
            <person name="Yamada M."/>
            <person name="Yasuda M."/>
            <person name="Tabata S."/>
        </authorList>
    </citation>
    <scope>NUCLEOTIDE SEQUENCE [LARGE SCALE GENOMIC DNA]</scope>
    <source>
        <strain>ATCC 27184 / PCC 6803 / Kazusa</strain>
    </source>
</reference>
<organism>
    <name type="scientific">Synechocystis sp. (strain ATCC 27184 / PCC 6803 / Kazusa)</name>
    <dbReference type="NCBI Taxonomy" id="1111708"/>
    <lineage>
        <taxon>Bacteria</taxon>
        <taxon>Bacillati</taxon>
        <taxon>Cyanobacteriota</taxon>
        <taxon>Cyanophyceae</taxon>
        <taxon>Synechococcales</taxon>
        <taxon>Merismopediaceae</taxon>
        <taxon>Synechocystis</taxon>
    </lineage>
</organism>
<feature type="chain" id="PRO_0000157891" description="Uncharacterized protein sll1609">
    <location>
        <begin position="1"/>
        <end position="177"/>
    </location>
</feature>
<accession>P73844</accession>
<comment type="similarity">
    <text evidence="1">To Synechocystis PCC 6803 slr1290 and sll0925.</text>
</comment>
<protein>
    <recommendedName>
        <fullName>Uncharacterized protein sll1609</fullName>
    </recommendedName>
</protein>
<sequence length="177" mass="20457">MMVVATTKILTAAEYLQREEQATEKSEFIQGEIIPIAGASANHNRLTFNLSRLLPLEIGDRQYEIFVSDMRLWIAESESYFYPDVMVIAEEPKFTDNSQMAVTNPSLIAEVLSTSAAGFDKNQKFGFYRTIPKLQEYLLIDQFCYRVEHYQKVGDRQWLLTELMGENAEIEFSFMKI</sequence>
<gene>
    <name type="ordered locus">sll1609</name>
</gene>